<sequence length="341" mass="37308">MKALSKLKAQPGIWMTDVPVPELGHNDVMIKIRKTAICGTDVHIYNWDEWSQKTIPVPMVVGHEYIGEIVAIGQEVKGFNIGDRVSGEGHITCGHCRNCRGGRTHLCRNTIGVGVNRPGCFAEYLVIPAFNAFKIPDNIPDELAAIFDPFGNAVHTALSFDLVGEDVLVSGAGPIGIMAAAICKHVGARHVVITDVNEYRLDLAKKMGVTRAVNVSKENLTDVMKELGMTEGFDVGLEMSGAPPAFRTMLSTMNHGGRIALLGIPPSDMAIDWGQVIFKGLFIKGIYGREMFETWYKMAALIQSGLDLSPIITHQFPIDEFQKGFDIMRSGQSGKVILDWQ</sequence>
<gene>
    <name evidence="1" type="primary">tdh</name>
    <name type="ordered locus">PMI3178</name>
</gene>
<accession>B4F134</accession>
<evidence type="ECO:0000255" key="1">
    <source>
        <dbReference type="HAMAP-Rule" id="MF_00627"/>
    </source>
</evidence>
<comment type="function">
    <text evidence="1">Catalyzes the NAD(+)-dependent oxidation of L-threonine to 2-amino-3-ketobutyrate.</text>
</comment>
<comment type="catalytic activity">
    <reaction evidence="1">
        <text>L-threonine + NAD(+) = (2S)-2-amino-3-oxobutanoate + NADH + H(+)</text>
        <dbReference type="Rhea" id="RHEA:13161"/>
        <dbReference type="ChEBI" id="CHEBI:15378"/>
        <dbReference type="ChEBI" id="CHEBI:57540"/>
        <dbReference type="ChEBI" id="CHEBI:57926"/>
        <dbReference type="ChEBI" id="CHEBI:57945"/>
        <dbReference type="ChEBI" id="CHEBI:78948"/>
        <dbReference type="EC" id="1.1.1.103"/>
    </reaction>
</comment>
<comment type="cofactor">
    <cofactor evidence="1">
        <name>Zn(2+)</name>
        <dbReference type="ChEBI" id="CHEBI:29105"/>
    </cofactor>
    <text evidence="1">Binds 2 Zn(2+) ions per subunit.</text>
</comment>
<comment type="pathway">
    <text evidence="1">Amino-acid degradation; L-threonine degradation via oxydo-reductase pathway; glycine from L-threonine: step 1/2.</text>
</comment>
<comment type="subunit">
    <text evidence="1">Homotetramer.</text>
</comment>
<comment type="subcellular location">
    <subcellularLocation>
        <location evidence="1">Cytoplasm</location>
    </subcellularLocation>
</comment>
<comment type="similarity">
    <text evidence="1">Belongs to the zinc-containing alcohol dehydrogenase family.</text>
</comment>
<proteinExistence type="inferred from homology"/>
<feature type="chain" id="PRO_1000130555" description="L-threonine 3-dehydrogenase">
    <location>
        <begin position="1"/>
        <end position="341"/>
    </location>
</feature>
<feature type="active site" description="Charge relay system" evidence="1">
    <location>
        <position position="40"/>
    </location>
</feature>
<feature type="active site" description="Charge relay system" evidence="1">
    <location>
        <position position="43"/>
    </location>
</feature>
<feature type="binding site" evidence="1">
    <location>
        <position position="38"/>
    </location>
    <ligand>
        <name>Zn(2+)</name>
        <dbReference type="ChEBI" id="CHEBI:29105"/>
        <label>1</label>
        <note>catalytic</note>
    </ligand>
</feature>
<feature type="binding site" evidence="1">
    <location>
        <position position="63"/>
    </location>
    <ligand>
        <name>Zn(2+)</name>
        <dbReference type="ChEBI" id="CHEBI:29105"/>
        <label>1</label>
        <note>catalytic</note>
    </ligand>
</feature>
<feature type="binding site" evidence="1">
    <location>
        <position position="64"/>
    </location>
    <ligand>
        <name>Zn(2+)</name>
        <dbReference type="ChEBI" id="CHEBI:29105"/>
        <label>1</label>
        <note>catalytic</note>
    </ligand>
</feature>
<feature type="binding site" evidence="1">
    <location>
        <position position="93"/>
    </location>
    <ligand>
        <name>Zn(2+)</name>
        <dbReference type="ChEBI" id="CHEBI:29105"/>
        <label>2</label>
    </ligand>
</feature>
<feature type="binding site" evidence="1">
    <location>
        <position position="96"/>
    </location>
    <ligand>
        <name>Zn(2+)</name>
        <dbReference type="ChEBI" id="CHEBI:29105"/>
        <label>2</label>
    </ligand>
</feature>
<feature type="binding site" evidence="1">
    <location>
        <position position="99"/>
    </location>
    <ligand>
        <name>Zn(2+)</name>
        <dbReference type="ChEBI" id="CHEBI:29105"/>
        <label>2</label>
    </ligand>
</feature>
<feature type="binding site" evidence="1">
    <location>
        <position position="107"/>
    </location>
    <ligand>
        <name>Zn(2+)</name>
        <dbReference type="ChEBI" id="CHEBI:29105"/>
        <label>2</label>
    </ligand>
</feature>
<feature type="binding site" evidence="1">
    <location>
        <position position="175"/>
    </location>
    <ligand>
        <name>NAD(+)</name>
        <dbReference type="ChEBI" id="CHEBI:57540"/>
    </ligand>
</feature>
<feature type="binding site" evidence="1">
    <location>
        <position position="195"/>
    </location>
    <ligand>
        <name>NAD(+)</name>
        <dbReference type="ChEBI" id="CHEBI:57540"/>
    </ligand>
</feature>
<feature type="binding site" evidence="1">
    <location>
        <position position="200"/>
    </location>
    <ligand>
        <name>NAD(+)</name>
        <dbReference type="ChEBI" id="CHEBI:57540"/>
    </ligand>
</feature>
<feature type="binding site" evidence="1">
    <location>
        <begin position="262"/>
        <end position="264"/>
    </location>
    <ligand>
        <name>NAD(+)</name>
        <dbReference type="ChEBI" id="CHEBI:57540"/>
    </ligand>
</feature>
<feature type="binding site" evidence="1">
    <location>
        <begin position="286"/>
        <end position="287"/>
    </location>
    <ligand>
        <name>NAD(+)</name>
        <dbReference type="ChEBI" id="CHEBI:57540"/>
    </ligand>
</feature>
<feature type="site" description="Important for catalytic activity for the proton relay mechanism but does not participate directly in the coordination of zinc atom" evidence="1">
    <location>
        <position position="148"/>
    </location>
</feature>
<organism>
    <name type="scientific">Proteus mirabilis (strain HI4320)</name>
    <dbReference type="NCBI Taxonomy" id="529507"/>
    <lineage>
        <taxon>Bacteria</taxon>
        <taxon>Pseudomonadati</taxon>
        <taxon>Pseudomonadota</taxon>
        <taxon>Gammaproteobacteria</taxon>
        <taxon>Enterobacterales</taxon>
        <taxon>Morganellaceae</taxon>
        <taxon>Proteus</taxon>
    </lineage>
</organism>
<protein>
    <recommendedName>
        <fullName evidence="1">L-threonine 3-dehydrogenase</fullName>
        <shortName evidence="1">TDH</shortName>
        <ecNumber evidence="1">1.1.1.103</ecNumber>
    </recommendedName>
</protein>
<dbReference type="EC" id="1.1.1.103" evidence="1"/>
<dbReference type="EMBL" id="AM942759">
    <property type="protein sequence ID" value="CAR46238.1"/>
    <property type="molecule type" value="Genomic_DNA"/>
</dbReference>
<dbReference type="RefSeq" id="WP_004246460.1">
    <property type="nucleotide sequence ID" value="NC_010554.1"/>
</dbReference>
<dbReference type="SMR" id="B4F134"/>
<dbReference type="EnsemblBacteria" id="CAR46238">
    <property type="protein sequence ID" value="CAR46238"/>
    <property type="gene ID" value="PMI3178"/>
</dbReference>
<dbReference type="GeneID" id="6800781"/>
<dbReference type="KEGG" id="pmr:PMI3178"/>
<dbReference type="eggNOG" id="COG1063">
    <property type="taxonomic scope" value="Bacteria"/>
</dbReference>
<dbReference type="HOGENOM" id="CLU_026673_11_0_6"/>
<dbReference type="UniPathway" id="UPA00046">
    <property type="reaction ID" value="UER00505"/>
</dbReference>
<dbReference type="Proteomes" id="UP000008319">
    <property type="component" value="Chromosome"/>
</dbReference>
<dbReference type="GO" id="GO:0005737">
    <property type="term" value="C:cytoplasm"/>
    <property type="evidence" value="ECO:0007669"/>
    <property type="project" value="UniProtKB-SubCell"/>
</dbReference>
<dbReference type="GO" id="GO:0008743">
    <property type="term" value="F:L-threonine 3-dehydrogenase activity"/>
    <property type="evidence" value="ECO:0007669"/>
    <property type="project" value="UniProtKB-UniRule"/>
</dbReference>
<dbReference type="GO" id="GO:0008270">
    <property type="term" value="F:zinc ion binding"/>
    <property type="evidence" value="ECO:0007669"/>
    <property type="project" value="UniProtKB-UniRule"/>
</dbReference>
<dbReference type="GO" id="GO:0019518">
    <property type="term" value="P:L-threonine catabolic process to glycine"/>
    <property type="evidence" value="ECO:0007669"/>
    <property type="project" value="UniProtKB-UniPathway"/>
</dbReference>
<dbReference type="FunFam" id="3.40.50.720:FF:000059">
    <property type="entry name" value="L-threonine 3-dehydrogenase"/>
    <property type="match status" value="1"/>
</dbReference>
<dbReference type="Gene3D" id="3.90.180.10">
    <property type="entry name" value="Medium-chain alcohol dehydrogenases, catalytic domain"/>
    <property type="match status" value="1"/>
</dbReference>
<dbReference type="Gene3D" id="3.40.50.720">
    <property type="entry name" value="NAD(P)-binding Rossmann-like Domain"/>
    <property type="match status" value="1"/>
</dbReference>
<dbReference type="HAMAP" id="MF_00627">
    <property type="entry name" value="Thr_dehydrog"/>
    <property type="match status" value="1"/>
</dbReference>
<dbReference type="InterPro" id="IPR013149">
    <property type="entry name" value="ADH-like_C"/>
</dbReference>
<dbReference type="InterPro" id="IPR013154">
    <property type="entry name" value="ADH-like_N"/>
</dbReference>
<dbReference type="InterPro" id="IPR002328">
    <property type="entry name" value="ADH_Zn_CS"/>
</dbReference>
<dbReference type="InterPro" id="IPR011032">
    <property type="entry name" value="GroES-like_sf"/>
</dbReference>
<dbReference type="InterPro" id="IPR004627">
    <property type="entry name" value="L-Threonine_3-DHase"/>
</dbReference>
<dbReference type="InterPro" id="IPR036291">
    <property type="entry name" value="NAD(P)-bd_dom_sf"/>
</dbReference>
<dbReference type="InterPro" id="IPR020843">
    <property type="entry name" value="PKS_ER"/>
</dbReference>
<dbReference type="InterPro" id="IPR050129">
    <property type="entry name" value="Zn_alcohol_dh"/>
</dbReference>
<dbReference type="NCBIfam" id="NF003808">
    <property type="entry name" value="PRK05396.1"/>
    <property type="match status" value="1"/>
</dbReference>
<dbReference type="NCBIfam" id="TIGR00692">
    <property type="entry name" value="tdh"/>
    <property type="match status" value="1"/>
</dbReference>
<dbReference type="PANTHER" id="PTHR43401">
    <property type="entry name" value="L-THREONINE 3-DEHYDROGENASE"/>
    <property type="match status" value="1"/>
</dbReference>
<dbReference type="PANTHER" id="PTHR43401:SF2">
    <property type="entry name" value="L-THREONINE 3-DEHYDROGENASE"/>
    <property type="match status" value="1"/>
</dbReference>
<dbReference type="Pfam" id="PF08240">
    <property type="entry name" value="ADH_N"/>
    <property type="match status" value="1"/>
</dbReference>
<dbReference type="Pfam" id="PF00107">
    <property type="entry name" value="ADH_zinc_N"/>
    <property type="match status" value="1"/>
</dbReference>
<dbReference type="SMART" id="SM00829">
    <property type="entry name" value="PKS_ER"/>
    <property type="match status" value="1"/>
</dbReference>
<dbReference type="SUPFAM" id="SSF50129">
    <property type="entry name" value="GroES-like"/>
    <property type="match status" value="1"/>
</dbReference>
<dbReference type="SUPFAM" id="SSF51735">
    <property type="entry name" value="NAD(P)-binding Rossmann-fold domains"/>
    <property type="match status" value="1"/>
</dbReference>
<dbReference type="PROSITE" id="PS00059">
    <property type="entry name" value="ADH_ZINC"/>
    <property type="match status" value="1"/>
</dbReference>
<keyword id="KW-0963">Cytoplasm</keyword>
<keyword id="KW-0479">Metal-binding</keyword>
<keyword id="KW-0520">NAD</keyword>
<keyword id="KW-0560">Oxidoreductase</keyword>
<keyword id="KW-1185">Reference proteome</keyword>
<keyword id="KW-0862">Zinc</keyword>
<name>TDH_PROMH</name>
<reference key="1">
    <citation type="journal article" date="2008" name="J. Bacteriol.">
        <title>Complete genome sequence of uropathogenic Proteus mirabilis, a master of both adherence and motility.</title>
        <authorList>
            <person name="Pearson M.M."/>
            <person name="Sebaihia M."/>
            <person name="Churcher C."/>
            <person name="Quail M.A."/>
            <person name="Seshasayee A.S."/>
            <person name="Luscombe N.M."/>
            <person name="Abdellah Z."/>
            <person name="Arrosmith C."/>
            <person name="Atkin B."/>
            <person name="Chillingworth T."/>
            <person name="Hauser H."/>
            <person name="Jagels K."/>
            <person name="Moule S."/>
            <person name="Mungall K."/>
            <person name="Norbertczak H."/>
            <person name="Rabbinowitsch E."/>
            <person name="Walker D."/>
            <person name="Whithead S."/>
            <person name="Thomson N.R."/>
            <person name="Rather P.N."/>
            <person name="Parkhill J."/>
            <person name="Mobley H.L.T."/>
        </authorList>
    </citation>
    <scope>NUCLEOTIDE SEQUENCE [LARGE SCALE GENOMIC DNA]</scope>
    <source>
        <strain>HI4320</strain>
    </source>
</reference>